<organism>
    <name type="scientific">Listeria monocytogenes serovar 1/2a (strain ATCC BAA-679 / EGD-e)</name>
    <dbReference type="NCBI Taxonomy" id="169963"/>
    <lineage>
        <taxon>Bacteria</taxon>
        <taxon>Bacillati</taxon>
        <taxon>Bacillota</taxon>
        <taxon>Bacilli</taxon>
        <taxon>Bacillales</taxon>
        <taxon>Listeriaceae</taxon>
        <taxon>Listeria</taxon>
    </lineage>
</organism>
<comment type="function">
    <text evidence="1">Transcriptional factor involved in regulation of membrane lipid biosynthesis by repressing genes involved in fatty acid and phospholipid metabolism.</text>
</comment>
<comment type="similarity">
    <text evidence="1">Belongs to the FapR family.</text>
</comment>
<evidence type="ECO:0000255" key="1">
    <source>
        <dbReference type="HAMAP-Rule" id="MF_01814"/>
    </source>
</evidence>
<feature type="chain" id="PRO_0000172824" description="Transcription factor FapR">
    <location>
        <begin position="1"/>
        <end position="189"/>
    </location>
</feature>
<gene>
    <name evidence="1" type="primary">fapR</name>
    <name type="ordered locus">lmo1810</name>
</gene>
<reference key="1">
    <citation type="journal article" date="2001" name="Science">
        <title>Comparative genomics of Listeria species.</title>
        <authorList>
            <person name="Glaser P."/>
            <person name="Frangeul L."/>
            <person name="Buchrieser C."/>
            <person name="Rusniok C."/>
            <person name="Amend A."/>
            <person name="Baquero F."/>
            <person name="Berche P."/>
            <person name="Bloecker H."/>
            <person name="Brandt P."/>
            <person name="Chakraborty T."/>
            <person name="Charbit A."/>
            <person name="Chetouani F."/>
            <person name="Couve E."/>
            <person name="de Daruvar A."/>
            <person name="Dehoux P."/>
            <person name="Domann E."/>
            <person name="Dominguez-Bernal G."/>
            <person name="Duchaud E."/>
            <person name="Durant L."/>
            <person name="Dussurget O."/>
            <person name="Entian K.-D."/>
            <person name="Fsihi H."/>
            <person name="Garcia-del Portillo F."/>
            <person name="Garrido P."/>
            <person name="Gautier L."/>
            <person name="Goebel W."/>
            <person name="Gomez-Lopez N."/>
            <person name="Hain T."/>
            <person name="Hauf J."/>
            <person name="Jackson D."/>
            <person name="Jones L.-M."/>
            <person name="Kaerst U."/>
            <person name="Kreft J."/>
            <person name="Kuhn M."/>
            <person name="Kunst F."/>
            <person name="Kurapkat G."/>
            <person name="Madueno E."/>
            <person name="Maitournam A."/>
            <person name="Mata Vicente J."/>
            <person name="Ng E."/>
            <person name="Nedjari H."/>
            <person name="Nordsiek G."/>
            <person name="Novella S."/>
            <person name="de Pablos B."/>
            <person name="Perez-Diaz J.-C."/>
            <person name="Purcell R."/>
            <person name="Remmel B."/>
            <person name="Rose M."/>
            <person name="Schlueter T."/>
            <person name="Simoes N."/>
            <person name="Tierrez A."/>
            <person name="Vazquez-Boland J.-A."/>
            <person name="Voss H."/>
            <person name="Wehland J."/>
            <person name="Cossart P."/>
        </authorList>
    </citation>
    <scope>NUCLEOTIDE SEQUENCE [LARGE SCALE GENOMIC DNA]</scope>
    <source>
        <strain>ATCC BAA-679 / EGD-e</strain>
    </source>
</reference>
<protein>
    <recommendedName>
        <fullName evidence="1">Transcription factor FapR</fullName>
    </recommendedName>
    <alternativeName>
        <fullName evidence="1">Fatty acid and phospholipid biosynthesis regulator</fullName>
    </alternativeName>
</protein>
<accession>Q8Y687</accession>
<keyword id="KW-0238">DNA-binding</keyword>
<keyword id="KW-0275">Fatty acid biosynthesis</keyword>
<keyword id="KW-0276">Fatty acid metabolism</keyword>
<keyword id="KW-0444">Lipid biosynthesis</keyword>
<keyword id="KW-0443">Lipid metabolism</keyword>
<keyword id="KW-1185">Reference proteome</keyword>
<keyword id="KW-0678">Repressor</keyword>
<keyword id="KW-0804">Transcription</keyword>
<keyword id="KW-0805">Transcription regulation</keyword>
<sequence length="189" mass="21297">MKKYSKKDRQMKLQVAIEENPFITDEQLAEKFGVSVQTIRLDRVALSIPELRERIKHVASVNYADAVKSLPIDEVIGEIIDIQLSKSAISIFDVRSEHVFKRNKIARGHHLFAQANSLATAVIPNEIALTTQATVRFVRSVNEGERIIAKAKVRPATDNRAITIVDVKSYVGDEIVLKGKFEMYHATQK</sequence>
<name>FAPR_LISMO</name>
<dbReference type="EMBL" id="AL591981">
    <property type="protein sequence ID" value="CAC99888.1"/>
    <property type="molecule type" value="Genomic_DNA"/>
</dbReference>
<dbReference type="PIR" id="AB1301">
    <property type="entry name" value="AB1301"/>
</dbReference>
<dbReference type="RefSeq" id="NP_465335.1">
    <property type="nucleotide sequence ID" value="NC_003210.1"/>
</dbReference>
<dbReference type="RefSeq" id="WP_003723871.1">
    <property type="nucleotide sequence ID" value="NZ_CP149495.1"/>
</dbReference>
<dbReference type="SMR" id="Q8Y687"/>
<dbReference type="STRING" id="169963.gene:17594495"/>
<dbReference type="PaxDb" id="169963-lmo1810"/>
<dbReference type="EnsemblBacteria" id="CAC99888">
    <property type="protein sequence ID" value="CAC99888"/>
    <property type="gene ID" value="CAC99888"/>
</dbReference>
<dbReference type="GeneID" id="985918"/>
<dbReference type="KEGG" id="lmo:lmo1810"/>
<dbReference type="PATRIC" id="fig|169963.11.peg.1855"/>
<dbReference type="eggNOG" id="COG2050">
    <property type="taxonomic scope" value="Bacteria"/>
</dbReference>
<dbReference type="HOGENOM" id="CLU_095708_0_0_9"/>
<dbReference type="OrthoDB" id="1706183at2"/>
<dbReference type="PhylomeDB" id="Q8Y687"/>
<dbReference type="BioCyc" id="LMON169963:LMO1810-MONOMER"/>
<dbReference type="Proteomes" id="UP000000817">
    <property type="component" value="Chromosome"/>
</dbReference>
<dbReference type="GO" id="GO:0003677">
    <property type="term" value="F:DNA binding"/>
    <property type="evidence" value="ECO:0007669"/>
    <property type="project" value="UniProtKB-KW"/>
</dbReference>
<dbReference type="GO" id="GO:0003700">
    <property type="term" value="F:DNA-binding transcription factor activity"/>
    <property type="evidence" value="ECO:0007669"/>
    <property type="project" value="UniProtKB-UniRule"/>
</dbReference>
<dbReference type="GO" id="GO:0006633">
    <property type="term" value="P:fatty acid biosynthetic process"/>
    <property type="evidence" value="ECO:0007669"/>
    <property type="project" value="UniProtKB-KW"/>
</dbReference>
<dbReference type="GO" id="GO:0045892">
    <property type="term" value="P:negative regulation of DNA-templated transcription"/>
    <property type="evidence" value="ECO:0007669"/>
    <property type="project" value="UniProtKB-UniRule"/>
</dbReference>
<dbReference type="GO" id="GO:0045717">
    <property type="term" value="P:negative regulation of fatty acid biosynthetic process"/>
    <property type="evidence" value="ECO:0007669"/>
    <property type="project" value="UniProtKB-UniRule"/>
</dbReference>
<dbReference type="CDD" id="cd03440">
    <property type="entry name" value="hot_dog"/>
    <property type="match status" value="1"/>
</dbReference>
<dbReference type="Gene3D" id="3.10.129.10">
    <property type="entry name" value="Hotdog Thioesterase"/>
    <property type="match status" value="1"/>
</dbReference>
<dbReference type="Gene3D" id="1.10.10.10">
    <property type="entry name" value="Winged helix-like DNA-binding domain superfamily/Winged helix DNA-binding domain"/>
    <property type="match status" value="1"/>
</dbReference>
<dbReference type="HAMAP" id="MF_01814">
    <property type="entry name" value="Transcrip_fact_FapR"/>
    <property type="match status" value="1"/>
</dbReference>
<dbReference type="InterPro" id="IPR029069">
    <property type="entry name" value="HotDog_dom_sf"/>
</dbReference>
<dbReference type="InterPro" id="IPR017275">
    <property type="entry name" value="Transcription_factor_FapR"/>
</dbReference>
<dbReference type="InterPro" id="IPR036388">
    <property type="entry name" value="WH-like_DNA-bd_sf"/>
</dbReference>
<dbReference type="NCBIfam" id="NF003359">
    <property type="entry name" value="PRK04424.1"/>
    <property type="match status" value="1"/>
</dbReference>
<dbReference type="PIRSF" id="PIRSF037733">
    <property type="entry name" value="Transcription_factor_FapR"/>
    <property type="match status" value="1"/>
</dbReference>
<dbReference type="SUPFAM" id="SSF54637">
    <property type="entry name" value="Thioesterase/thiol ester dehydrase-isomerase"/>
    <property type="match status" value="1"/>
</dbReference>
<proteinExistence type="inferred from homology"/>